<protein>
    <recommendedName>
        <fullName>Capsid protein G8P</fullName>
    </recommendedName>
    <alternativeName>
        <fullName>Coat protein B</fullName>
    </alternativeName>
    <alternativeName>
        <fullName>Gene 8 protein</fullName>
        <shortName>G8P</shortName>
    </alternativeName>
    <alternativeName>
        <fullName>Major coat protein</fullName>
    </alternativeName>
</protein>
<organismHost>
    <name type="scientific">Escherichia coli</name>
    <dbReference type="NCBI Taxonomy" id="562"/>
</organismHost>
<keyword id="KW-0167">Capsid protein</keyword>
<keyword id="KW-0903">Direct protein sequencing</keyword>
<keyword id="KW-1139">Helical capsid protein</keyword>
<keyword id="KW-1043">Host membrane</keyword>
<keyword id="KW-0472">Membrane</keyword>
<keyword id="KW-0812">Transmembrane</keyword>
<keyword id="KW-1133">Transmembrane helix</keyword>
<keyword id="KW-0946">Virion</keyword>
<feature type="chain" id="PRO_0000098188" description="Capsid protein G8P">
    <location>
        <begin position="1"/>
        <end position="50"/>
    </location>
</feature>
<feature type="topological domain" description="Periplasmic">
    <location>
        <begin position="1"/>
        <end position="21"/>
    </location>
</feature>
<feature type="transmembrane region" description="Helical" evidence="2">
    <location>
        <begin position="22"/>
        <end position="42"/>
    </location>
</feature>
<feature type="topological domain" description="Cytoplasmic">
    <location>
        <begin position="43"/>
        <end position="50"/>
    </location>
</feature>
<feature type="non-terminal residue">
    <location>
        <position position="1"/>
    </location>
</feature>
<accession>P03618</accession>
<comment type="function">
    <text evidence="1">Self assembles to form a helical capsid wrapping up the viral genomic DNA. The capsid displays a filamentous structure with a length of 760-1950 nm and a width of 6-8 nm. The virion assembly and budding take place at the host inner membrane (By similarity).</text>
</comment>
<comment type="subunit">
    <text evidence="1">Homomultimerizes. There are several thousands of this protein in the phage capsid (By similarity).</text>
</comment>
<comment type="subcellular location">
    <subcellularLocation>
        <location evidence="3">Virion</location>
    </subcellularLocation>
    <subcellularLocation>
        <location>Host membrane</location>
        <topology>Single-pass type I membrane protein</topology>
    </subcellularLocation>
    <text evidence="1">prior to assembly, the major capsid protein is found associated with the bacterial host inner membrane.</text>
</comment>
<comment type="similarity">
    <text evidence="3">Belongs to the inovirus capsid protein family.</text>
</comment>
<gene>
    <name type="primary">VIII</name>
</gene>
<sequence length="50" mass="5209">AEGDDPAKAAFDSLQASATEYIGYAWAMVVVIVGATIGIKLFKKFASKAS</sequence>
<dbReference type="PIR" id="H04226">
    <property type="entry name" value="VCBPZ2"/>
</dbReference>
<dbReference type="BMRB" id="P03618"/>
<dbReference type="SMR" id="P03618"/>
<dbReference type="GO" id="GO:0019029">
    <property type="term" value="C:helical viral capsid"/>
    <property type="evidence" value="ECO:0007669"/>
    <property type="project" value="UniProtKB-KW"/>
</dbReference>
<dbReference type="GO" id="GO:0033644">
    <property type="term" value="C:host cell membrane"/>
    <property type="evidence" value="ECO:0007669"/>
    <property type="project" value="UniProtKB-SubCell"/>
</dbReference>
<dbReference type="GO" id="GO:0016020">
    <property type="term" value="C:membrane"/>
    <property type="evidence" value="ECO:0007669"/>
    <property type="project" value="UniProtKB-KW"/>
</dbReference>
<dbReference type="Gene3D" id="1.20.5.80">
    <property type="match status" value="1"/>
</dbReference>
<dbReference type="InterPro" id="IPR008020">
    <property type="entry name" value="G8P"/>
</dbReference>
<dbReference type="InterPro" id="IPR023390">
    <property type="entry name" value="Phage_M13_G8P_capsid_dom_sf"/>
</dbReference>
<dbReference type="Pfam" id="PF19199">
    <property type="entry name" value="Phage_coatGP8"/>
    <property type="match status" value="1"/>
</dbReference>
<dbReference type="PIRSF" id="PIRSF004117">
    <property type="entry name" value="Phage_coat_B"/>
    <property type="match status" value="1"/>
</dbReference>
<dbReference type="SUPFAM" id="SSF57987">
    <property type="entry name" value="Inovirus (filamentous phage) major coat protein"/>
    <property type="match status" value="1"/>
</dbReference>
<reference key="1">
    <citation type="journal article" date="1972" name="Biochem. J.">
        <title>The amino acid sequence of the B-protein of bacteriophage ZJ-2.</title>
        <authorList>
            <person name="Snell D.T."/>
            <person name="Offord R.E."/>
        </authorList>
    </citation>
    <scope>PROTEIN SEQUENCE</scope>
</reference>
<organism>
    <name type="scientific">Enterobacteria phage ZJ/2</name>
    <name type="common">Bacteriophage ZJ-2</name>
    <dbReference type="NCBI Taxonomy" id="10866"/>
    <lineage>
        <taxon>Viruses</taxon>
        <taxon>Monodnaviria</taxon>
        <taxon>Loebvirae</taxon>
        <taxon>Hofneiviricota</taxon>
        <taxon>Faserviricetes</taxon>
        <taxon>Tubulavirales</taxon>
        <taxon>Inoviridae</taxon>
    </lineage>
</organism>
<proteinExistence type="evidence at protein level"/>
<name>CAPSD_BPZJ2</name>
<evidence type="ECO:0000250" key="1"/>
<evidence type="ECO:0000255" key="2"/>
<evidence type="ECO:0000305" key="3"/>